<organism>
    <name type="scientific">Barbarea vulgaris</name>
    <name type="common">Yellow rocket</name>
    <name type="synonym">Erysimum barbarea</name>
    <dbReference type="NCBI Taxonomy" id="50459"/>
    <lineage>
        <taxon>Eukaryota</taxon>
        <taxon>Viridiplantae</taxon>
        <taxon>Streptophyta</taxon>
        <taxon>Embryophyta</taxon>
        <taxon>Tracheophyta</taxon>
        <taxon>Spermatophyta</taxon>
        <taxon>Magnoliopsida</taxon>
        <taxon>eudicotyledons</taxon>
        <taxon>Gunneridae</taxon>
        <taxon>Pentapetalae</taxon>
        <taxon>rosids</taxon>
        <taxon>malvids</taxon>
        <taxon>Brassicales</taxon>
        <taxon>Brassicaceae</taxon>
        <taxon>Cardamineae</taxon>
        <taxon>Barbarea</taxon>
    </lineage>
</organism>
<reference key="1">
    <citation type="journal article" date="2018" name="Plant Mol. Biol.">
        <title>A tandem array of UDP-glycosyltransferases from the UGT73C subfamily glycosylate sapogenins, forming a spectrum of mono- and bisdesmosidic saponins.</title>
        <authorList>
            <person name="Erthmann P.O."/>
            <person name="Agerbirk N."/>
            <person name="Bak S."/>
        </authorList>
    </citation>
    <scope>NUCLEOTIDE SEQUENCE [MRNA]</scope>
    <scope>FUNCTION</scope>
</reference>
<keyword id="KW-0328">Glycosyltransferase</keyword>
<keyword id="KW-0808">Transferase</keyword>
<gene>
    <name evidence="3" type="primary">UGT73C25</name>
</gene>
<feature type="chain" id="PRO_0000452132" description="UDP-glycosyltransferase 73C25">
    <location>
        <begin position="1"/>
        <end position="495"/>
    </location>
</feature>
<feature type="active site" description="Proton acceptor" evidence="1">
    <location>
        <position position="24"/>
    </location>
</feature>
<feature type="active site" description="Charge relay" evidence="1">
    <location>
        <position position="129"/>
    </location>
</feature>
<feature type="binding site" evidence="1">
    <location>
        <begin position="23"/>
        <end position="26"/>
    </location>
    <ligand>
        <name>UDP-alpha-D-glucose</name>
        <dbReference type="ChEBI" id="CHEBI:58885"/>
    </ligand>
</feature>
<feature type="binding site" evidence="1">
    <location>
        <begin position="355"/>
        <end position="358"/>
    </location>
    <ligand>
        <name>UDP-alpha-D-glucose</name>
        <dbReference type="ChEBI" id="CHEBI:58885"/>
    </ligand>
</feature>
<feature type="binding site" evidence="1">
    <location>
        <begin position="373"/>
        <end position="381"/>
    </location>
    <ligand>
        <name>UDP-alpha-D-glucose</name>
        <dbReference type="ChEBI" id="CHEBI:58885"/>
    </ligand>
</feature>
<feature type="binding site" evidence="1">
    <location>
        <begin position="397"/>
        <end position="398"/>
    </location>
    <ligand>
        <name>UDP-alpha-D-glucose</name>
        <dbReference type="ChEBI" id="CHEBI:58885"/>
    </ligand>
</feature>
<dbReference type="EC" id="2.4.1.-" evidence="2"/>
<dbReference type="EMBL" id="MF448366">
    <property type="protein sequence ID" value="AVW82181.1"/>
    <property type="molecule type" value="mRNA"/>
</dbReference>
<dbReference type="SMR" id="A0A2R4LMF9"/>
<dbReference type="GO" id="GO:0046527">
    <property type="term" value="F:glucosyltransferase activity"/>
    <property type="evidence" value="ECO:0000314"/>
    <property type="project" value="UniProtKB"/>
</dbReference>
<dbReference type="GO" id="GO:0035251">
    <property type="term" value="F:UDP-glucosyltransferase activity"/>
    <property type="evidence" value="ECO:0007669"/>
    <property type="project" value="TreeGrafter"/>
</dbReference>
<dbReference type="GO" id="GO:0016134">
    <property type="term" value="P:saponin metabolic process"/>
    <property type="evidence" value="ECO:0000314"/>
    <property type="project" value="UniProtKB"/>
</dbReference>
<dbReference type="CDD" id="cd03784">
    <property type="entry name" value="GT1_Gtf-like"/>
    <property type="match status" value="1"/>
</dbReference>
<dbReference type="FunFam" id="3.40.50.2000:FF:000047">
    <property type="entry name" value="Glycosyltransferase"/>
    <property type="match status" value="1"/>
</dbReference>
<dbReference type="FunFam" id="3.40.50.2000:FF:000071">
    <property type="entry name" value="Glycosyltransferase"/>
    <property type="match status" value="1"/>
</dbReference>
<dbReference type="Gene3D" id="3.40.50.2000">
    <property type="entry name" value="Glycogen Phosphorylase B"/>
    <property type="match status" value="2"/>
</dbReference>
<dbReference type="InterPro" id="IPR002213">
    <property type="entry name" value="UDP_glucos_trans"/>
</dbReference>
<dbReference type="InterPro" id="IPR035595">
    <property type="entry name" value="UDP_glycos_trans_CS"/>
</dbReference>
<dbReference type="PANTHER" id="PTHR48047">
    <property type="entry name" value="GLYCOSYLTRANSFERASE"/>
    <property type="match status" value="1"/>
</dbReference>
<dbReference type="PANTHER" id="PTHR48047:SF153">
    <property type="entry name" value="UDP-GLYCOSYLTRANSFERASE 73C5-RELATED"/>
    <property type="match status" value="1"/>
</dbReference>
<dbReference type="Pfam" id="PF00201">
    <property type="entry name" value="UDPGT"/>
    <property type="match status" value="1"/>
</dbReference>
<dbReference type="SUPFAM" id="SSF53756">
    <property type="entry name" value="UDP-Glycosyltransferase/glycogen phosphorylase"/>
    <property type="match status" value="1"/>
</dbReference>
<dbReference type="PROSITE" id="PS00375">
    <property type="entry name" value="UDPGT"/>
    <property type="match status" value="1"/>
</dbReference>
<name>73C25_BARVU</name>
<sequence length="495" mass="56021">MASITNHKSDPLHFVLFPFMAQGHMIPMVDIARLLAQRGLTITIVTTPHNASRFKNVLNRAIESGLPINILHVKLPYQEVGLPEGLENIDCFDSMEHMIPFFKGVNMVEESVQKLFEEMSPRPSCIISDFCLPYTSKVAKKFNIPKILFHGMCCLCLLCMHVLRKNPKILENLKSDKEHFVVPYFPDKIELTRPQVPMDTYVPGELKEFMEDLVEADKTSYGVIVNTFQELEPAYVKDYKETRSGKAWSVGPVALCNKARIDKAERGNKSDIDQDECLKWLDSKEERSVLYVCLGSICNLPLAQLKELGLGLEESTRPFIWVIRGWDKNKQLVEWFSESGFEERIKDRGLLIKGWSPQMLILSHQSVGGFLTHCGWNSTLEGITAGLPLLTWPLFADQFCNEKLVVQVLNSGVRAGVEQPMKWGEEEKIGVLVDKEGVKKAVEELMGESDEANERRRRAKELGELAHKAVEEGGSSHSNITFLLQDIMQLAQSNN</sequence>
<evidence type="ECO:0000250" key="1">
    <source>
        <dbReference type="UniProtKB" id="A0A0A1HA03"/>
    </source>
</evidence>
<evidence type="ECO:0000269" key="2">
    <source>
    </source>
</evidence>
<evidence type="ECO:0000303" key="3">
    <source>
    </source>
</evidence>
<evidence type="ECO:0000305" key="4"/>
<protein>
    <recommendedName>
        <fullName evidence="3">UDP-glycosyltransferase 73C25</fullName>
        <ecNumber evidence="2">2.4.1.-</ecNumber>
    </recommendedName>
</protein>
<accession>A0A2R4LMF9</accession>
<comment type="function">
    <text evidence="2">Catalyzes the transfer of a glucose (Glc) moiety from UDP-Glc to the C-28 carboxylic group of oleanolate 3-O-beta-D-glucoside to form oleanolate 3,28-O-beta-D-diglucoside.</text>
</comment>
<comment type="similarity">
    <text evidence="4">Belongs to the UDP-glycosyltransferase family.</text>
</comment>
<proteinExistence type="evidence at transcript level"/>